<reference key="1">
    <citation type="journal article" date="2003" name="DNA Res.">
        <title>Complete genome structure of Gloeobacter violaceus PCC 7421, a cyanobacterium that lacks thylakoids.</title>
        <authorList>
            <person name="Nakamura Y."/>
            <person name="Kaneko T."/>
            <person name="Sato S."/>
            <person name="Mimuro M."/>
            <person name="Miyashita H."/>
            <person name="Tsuchiya T."/>
            <person name="Sasamoto S."/>
            <person name="Watanabe A."/>
            <person name="Kawashima K."/>
            <person name="Kishida Y."/>
            <person name="Kiyokawa C."/>
            <person name="Kohara M."/>
            <person name="Matsumoto M."/>
            <person name="Matsuno A."/>
            <person name="Nakazaki N."/>
            <person name="Shimpo S."/>
            <person name="Takeuchi C."/>
            <person name="Yamada M."/>
            <person name="Tabata S."/>
        </authorList>
    </citation>
    <scope>NUCLEOTIDE SEQUENCE [LARGE SCALE GENOMIC DNA]</scope>
    <source>
        <strain>ATCC 29082 / PCC 7421</strain>
    </source>
</reference>
<dbReference type="EMBL" id="BA000045">
    <property type="protein sequence ID" value="BAC90279.1"/>
    <property type="molecule type" value="Genomic_DNA"/>
</dbReference>
<dbReference type="RefSeq" id="NP_925284.1">
    <property type="nucleotide sequence ID" value="NC_005125.1"/>
</dbReference>
<dbReference type="RefSeq" id="WP_011142334.1">
    <property type="nucleotide sequence ID" value="NC_005125.1"/>
</dbReference>
<dbReference type="SMR" id="Q7NI46"/>
<dbReference type="STRING" id="251221.gene:10759835"/>
<dbReference type="EnsemblBacteria" id="BAC90279">
    <property type="protein sequence ID" value="BAC90279"/>
    <property type="gene ID" value="BAC90279"/>
</dbReference>
<dbReference type="KEGG" id="gvi:gll2338"/>
<dbReference type="eggNOG" id="COG2010">
    <property type="taxonomic scope" value="Bacteria"/>
</dbReference>
<dbReference type="HOGENOM" id="CLU_104149_0_0_3"/>
<dbReference type="InParanoid" id="Q7NI46"/>
<dbReference type="OrthoDB" id="486949at2"/>
<dbReference type="PhylomeDB" id="Q7NI46"/>
<dbReference type="Proteomes" id="UP000000557">
    <property type="component" value="Chromosome"/>
</dbReference>
<dbReference type="GO" id="GO:0009523">
    <property type="term" value="C:photosystem II"/>
    <property type="evidence" value="ECO:0007669"/>
    <property type="project" value="UniProtKB-KW"/>
</dbReference>
<dbReference type="GO" id="GO:0005886">
    <property type="term" value="C:plasma membrane"/>
    <property type="evidence" value="ECO:0007669"/>
    <property type="project" value="UniProtKB-SubCell"/>
</dbReference>
<dbReference type="GO" id="GO:0009055">
    <property type="term" value="F:electron transfer activity"/>
    <property type="evidence" value="ECO:0007669"/>
    <property type="project" value="InterPro"/>
</dbReference>
<dbReference type="GO" id="GO:0020037">
    <property type="term" value="F:heme binding"/>
    <property type="evidence" value="ECO:0007669"/>
    <property type="project" value="InterPro"/>
</dbReference>
<dbReference type="GO" id="GO:0005506">
    <property type="term" value="F:iron ion binding"/>
    <property type="evidence" value="ECO:0007669"/>
    <property type="project" value="InterPro"/>
</dbReference>
<dbReference type="GO" id="GO:0015979">
    <property type="term" value="P:photosynthesis"/>
    <property type="evidence" value="ECO:0007669"/>
    <property type="project" value="UniProtKB-KW"/>
</dbReference>
<dbReference type="GO" id="GO:0022904">
    <property type="term" value="P:respiratory electron transport chain"/>
    <property type="evidence" value="ECO:0007669"/>
    <property type="project" value="InterPro"/>
</dbReference>
<dbReference type="Gene3D" id="1.10.760.10">
    <property type="entry name" value="Cytochrome c-like domain"/>
    <property type="match status" value="1"/>
</dbReference>
<dbReference type="InterPro" id="IPR009056">
    <property type="entry name" value="Cyt_c-like_dom"/>
</dbReference>
<dbReference type="InterPro" id="IPR036909">
    <property type="entry name" value="Cyt_c-like_dom_sf"/>
</dbReference>
<dbReference type="InterPro" id="IPR029490">
    <property type="entry name" value="Cytochrom_C550"/>
</dbReference>
<dbReference type="InterPro" id="IPR016003">
    <property type="entry name" value="PsbV_cyt_c550-like"/>
</dbReference>
<dbReference type="Pfam" id="PF14495">
    <property type="entry name" value="Cytochrom_C550"/>
    <property type="match status" value="1"/>
</dbReference>
<dbReference type="PIRSF" id="PIRSF005890">
    <property type="entry name" value="Phot_II_cyt_c550"/>
    <property type="match status" value="1"/>
</dbReference>
<dbReference type="SUPFAM" id="SSF46626">
    <property type="entry name" value="Cytochrome c"/>
    <property type="match status" value="1"/>
</dbReference>
<dbReference type="PROSITE" id="PS51007">
    <property type="entry name" value="CYTC"/>
    <property type="match status" value="1"/>
</dbReference>
<protein>
    <recommendedName>
        <fullName>Cytochrome c-550 2</fullName>
    </recommendedName>
    <alternativeName>
        <fullName>Cytochrome c550 2</fullName>
    </alternativeName>
    <alternativeName>
        <fullName>Low-potential cytochrome c 2</fullName>
    </alternativeName>
</protein>
<proteinExistence type="inferred from homology"/>
<comment type="function">
    <text evidence="3">Probable low-potential cytochrome c, might function in photosystem II (PSII).</text>
</comment>
<comment type="cofactor">
    <cofactor evidence="2">
        <name>heme c</name>
        <dbReference type="ChEBI" id="CHEBI:61717"/>
    </cofactor>
    <text evidence="2">Binds 1 heme c group covalently per subunit.</text>
</comment>
<comment type="subcellular location">
    <subcellularLocation>
        <location evidence="1">Cell inner membrane</location>
        <topology evidence="1">Peripheral membrane protein</topology>
        <orientation evidence="1">Periplasmic side</orientation>
    </subcellularLocation>
    <text evidence="2 6">Associated with photosystem II at the periplasmic side of the inner membrane.</text>
</comment>
<comment type="similarity">
    <text evidence="6">Belongs to the cytochrome c family. PsbV subfamily.</text>
</comment>
<comment type="caution">
    <text evidence="6">It is not clear which residue serves as the second axial ligand for the heme group.</text>
</comment>
<sequence>MFSRQFGRLATLALALAVAGCAGGEQSTTAEAPSEPAPVAKPDVVSAATGELSNFSTADLKQAKKLFQAECGRCHVGGQTYGTYNSTDVSLSYDALTNATPPRNTVAGLVDYMKKPTSYDGRTDLLKTGEHASFTGLGDEKLRLIAGHIIKEATSNPNWGQGKDTR</sequence>
<accession>Q7NI46</accession>
<gene>
    <name type="primary">psbV2</name>
    <name type="ordered locus">gll2338</name>
</gene>
<feature type="signal peptide" evidence="4">
    <location>
        <begin position="1"/>
        <end position="32"/>
    </location>
</feature>
<feature type="chain" id="PRO_0000295598" description="Cytochrome c-550 2">
    <location>
        <begin position="33"/>
        <end position="166"/>
    </location>
</feature>
<feature type="binding site" description="covalent" evidence="5">
    <location>
        <position position="71"/>
    </location>
    <ligand>
        <name>heme c</name>
        <dbReference type="ChEBI" id="CHEBI:61717"/>
    </ligand>
</feature>
<feature type="binding site" description="covalent" evidence="5">
    <location>
        <position position="74"/>
    </location>
    <ligand>
        <name>heme c</name>
        <dbReference type="ChEBI" id="CHEBI:61717"/>
    </ligand>
</feature>
<feature type="binding site" description="axial binding residue" evidence="5">
    <location>
        <position position="75"/>
    </location>
    <ligand>
        <name>heme c</name>
        <dbReference type="ChEBI" id="CHEBI:61717"/>
    </ligand>
    <ligandPart>
        <name>Fe</name>
        <dbReference type="ChEBI" id="CHEBI:18248"/>
    </ligandPart>
</feature>
<organism>
    <name type="scientific">Gloeobacter violaceus (strain ATCC 29082 / PCC 7421)</name>
    <dbReference type="NCBI Taxonomy" id="251221"/>
    <lineage>
        <taxon>Bacteria</taxon>
        <taxon>Bacillati</taxon>
        <taxon>Cyanobacteriota</taxon>
        <taxon>Cyanophyceae</taxon>
        <taxon>Gloeobacterales</taxon>
        <taxon>Gloeobacteraceae</taxon>
        <taxon>Gloeobacter</taxon>
    </lineage>
</organism>
<name>C5502_GLOVI</name>
<evidence type="ECO:0000250" key="1"/>
<evidence type="ECO:0000250" key="2">
    <source>
        <dbReference type="UniProtKB" id="P0A386"/>
    </source>
</evidence>
<evidence type="ECO:0000250" key="3">
    <source>
        <dbReference type="UniProtKB" id="Q8DJE2"/>
    </source>
</evidence>
<evidence type="ECO:0000255" key="4"/>
<evidence type="ECO:0000255" key="5">
    <source>
        <dbReference type="PROSITE-ProRule" id="PRU00433"/>
    </source>
</evidence>
<evidence type="ECO:0000305" key="6"/>
<keyword id="KW-0997">Cell inner membrane</keyword>
<keyword id="KW-1003">Cell membrane</keyword>
<keyword id="KW-0249">Electron transport</keyword>
<keyword id="KW-0349">Heme</keyword>
<keyword id="KW-0408">Iron</keyword>
<keyword id="KW-0472">Membrane</keyword>
<keyword id="KW-0479">Metal-binding</keyword>
<keyword id="KW-0602">Photosynthesis</keyword>
<keyword id="KW-0604">Photosystem II</keyword>
<keyword id="KW-1185">Reference proteome</keyword>
<keyword id="KW-0732">Signal</keyword>
<keyword id="KW-0813">Transport</keyword>